<name>SG111_DROGR</name>
<keyword id="KW-0010">Activator</keyword>
<keyword id="KW-0156">Chromatin regulator</keyword>
<keyword id="KW-0963">Cytoplasm</keyword>
<keyword id="KW-0479">Metal-binding</keyword>
<keyword id="KW-0509">mRNA transport</keyword>
<keyword id="KW-0539">Nucleus</keyword>
<keyword id="KW-0597">Phosphoprotein</keyword>
<keyword id="KW-0653">Protein transport</keyword>
<keyword id="KW-1185">Reference proteome</keyword>
<keyword id="KW-0804">Transcription</keyword>
<keyword id="KW-0805">Transcription regulation</keyword>
<keyword id="KW-0811">Translocation</keyword>
<keyword id="KW-0813">Transport</keyword>
<keyword id="KW-0862">Zinc</keyword>
<keyword id="KW-0863">Zinc-finger</keyword>
<reference key="1">
    <citation type="journal article" date="2007" name="Nature">
        <title>Evolution of genes and genomes on the Drosophila phylogeny.</title>
        <authorList>
            <consortium name="Drosophila 12 genomes consortium"/>
        </authorList>
    </citation>
    <scope>NUCLEOTIDE SEQUENCE [LARGE SCALE GENOMIC DNA]</scope>
    <source>
        <strain>Tucson 15287-2541.00</strain>
    </source>
</reference>
<accession>B4J1U4</accession>
<proteinExistence type="inferred from homology"/>
<organism>
    <name type="scientific">Drosophila grimshawi</name>
    <name type="common">Hawaiian fruit fly</name>
    <name type="synonym">Idiomyia grimshawi</name>
    <dbReference type="NCBI Taxonomy" id="7222"/>
    <lineage>
        <taxon>Eukaryota</taxon>
        <taxon>Metazoa</taxon>
        <taxon>Ecdysozoa</taxon>
        <taxon>Arthropoda</taxon>
        <taxon>Hexapoda</taxon>
        <taxon>Insecta</taxon>
        <taxon>Pterygota</taxon>
        <taxon>Neoptera</taxon>
        <taxon>Endopterygota</taxon>
        <taxon>Diptera</taxon>
        <taxon>Brachycera</taxon>
        <taxon>Muscomorpha</taxon>
        <taxon>Ephydroidea</taxon>
        <taxon>Drosophilidae</taxon>
        <taxon>Drosophila</taxon>
        <taxon>Hawaiian Drosophila</taxon>
    </lineage>
</organism>
<protein>
    <recommendedName>
        <fullName evidence="2">SAGA-associated factor 11 homolog 1</fullName>
    </recommendedName>
</protein>
<sequence length="211" mass="22852">MANSNTNQLHPLGATTSQTFTTALNHTAASTIAINFRELIKEPKELDEASNYLYQALLDDVVAGIFIETHHLRKTGNLAALDGVGEENLESAFHICEMPNLDIFGISTAKKQMDCTCPNCDRLVAAARFAPHLEKCMGMGRISSRIASRRLATKEGSSASTSSTSTYLQSGGNTGGTDDEDDVDWSSDKRKKKSTQSSRNNGSKKNNGKTF</sequence>
<comment type="function">
    <text evidence="2">Component of the transcription regulatory histone acetylation (HAT) complex SAGA, a multiprotein complex that activates transcription by remodeling chromatin and mediating histone acetylation and deubiquitination. Within the SAGA complex, participates in a subcomplex that specifically deubiquitinates histone H2B. The SAGA complex is recruited to specific gene promoters by activators, where it is required for transcription. Required for nuclear receptor-mediated transactivation. Binds independently on SAGA to promoters in an RNA-dependent manner. Binds to mRNA and is essential for total mRNA export from the nucleus. Required to counteract heterochromatin silencing. Controls the development of neuronal connectivity in visual system by being required for accurate axon targeting in the optic lobe. Required for expression of ecdysone-induced genes such as br/broad.</text>
</comment>
<comment type="subunit">
    <text evidence="2">Component of some SAGA transcription coactivator-HAT complexes, at least composed of Ada2b, not/nonstop, Pcaf/Gcn5, Sgf11 and Spt3. Within the SAGA complex, Sgf11, e(y)2, and not/nonstop form an additional subcomplex of SAGA called the DUB module (deubiquitination module). Interacts directly with not/nonstop. Interacts with the AMEX complex component xmas-2. Interacts with Cbp80; important for promoter recruitment of Sgf11 that is not associated with the DUB module.</text>
</comment>
<comment type="subcellular location">
    <subcellularLocation>
        <location evidence="2">Nucleus</location>
        <location evidence="2">Nucleoplasm</location>
    </subcellularLocation>
    <subcellularLocation>
        <location evidence="2">Cytoplasm</location>
    </subcellularLocation>
    <text evidence="2">Localizes to nuclear periphery, in contact with the nuclear pore complex (NPC).</text>
</comment>
<comment type="domain">
    <text evidence="2">The long N-terminal helix forms part of the 'assembly lobe' of the SAGA deubiquitination module.</text>
</comment>
<comment type="domain">
    <text evidence="2">The C-terminal SGF11-type zinc-finger domain together with the C-terminal catalytic domain of not/nonstop forms the 'catalytic lobe' of the SAGA deubiquitination module.</text>
</comment>
<comment type="similarity">
    <text evidence="2">Belongs to the SGF11 family.</text>
</comment>
<gene>
    <name evidence="2" type="primary">Sgf11-1</name>
    <name type="ORF">GH14369</name>
</gene>
<dbReference type="EMBL" id="CH916366">
    <property type="protein sequence ID" value="EDV98024.1"/>
    <property type="molecule type" value="Genomic_DNA"/>
</dbReference>
<dbReference type="SMR" id="B4J1U4"/>
<dbReference type="FunCoup" id="B4J1U4">
    <property type="interactions" value="237"/>
</dbReference>
<dbReference type="STRING" id="7222.B4J1U4"/>
<dbReference type="EnsemblMetazoa" id="FBtr0149783">
    <property type="protein sequence ID" value="FBpp0148275"/>
    <property type="gene ID" value="FBgn0121845"/>
</dbReference>
<dbReference type="EnsemblMetazoa" id="XM_001985640.2">
    <property type="protein sequence ID" value="XP_001985676.1"/>
    <property type="gene ID" value="LOC6558876"/>
</dbReference>
<dbReference type="GeneID" id="6558876"/>
<dbReference type="KEGG" id="dgr:6558876"/>
<dbReference type="eggNOG" id="KOG2612">
    <property type="taxonomic scope" value="Eukaryota"/>
</dbReference>
<dbReference type="HOGENOM" id="CLU_100743_0_0_1"/>
<dbReference type="InParanoid" id="B4J1U4"/>
<dbReference type="OMA" id="IHQEDPN"/>
<dbReference type="OrthoDB" id="21557at2759"/>
<dbReference type="PhylomeDB" id="B4J1U4"/>
<dbReference type="Proteomes" id="UP000001070">
    <property type="component" value="Unassembled WGS sequence"/>
</dbReference>
<dbReference type="GO" id="GO:0005737">
    <property type="term" value="C:cytoplasm"/>
    <property type="evidence" value="ECO:0007669"/>
    <property type="project" value="UniProtKB-SubCell"/>
</dbReference>
<dbReference type="GO" id="GO:0071819">
    <property type="term" value="C:DUBm complex"/>
    <property type="evidence" value="ECO:0007669"/>
    <property type="project" value="UniProtKB-UniRule"/>
</dbReference>
<dbReference type="GO" id="GO:0005643">
    <property type="term" value="C:nuclear pore"/>
    <property type="evidence" value="ECO:0007669"/>
    <property type="project" value="UniProtKB-UniRule"/>
</dbReference>
<dbReference type="GO" id="GO:0005654">
    <property type="term" value="C:nucleoplasm"/>
    <property type="evidence" value="ECO:0007669"/>
    <property type="project" value="UniProtKB-SubCell"/>
</dbReference>
<dbReference type="GO" id="GO:0000124">
    <property type="term" value="C:SAGA complex"/>
    <property type="evidence" value="ECO:0000250"/>
    <property type="project" value="UniProtKB"/>
</dbReference>
<dbReference type="GO" id="GO:0003713">
    <property type="term" value="F:transcription coactivator activity"/>
    <property type="evidence" value="ECO:0007669"/>
    <property type="project" value="UniProtKB-UniRule"/>
</dbReference>
<dbReference type="GO" id="GO:0008270">
    <property type="term" value="F:zinc ion binding"/>
    <property type="evidence" value="ECO:0007669"/>
    <property type="project" value="UniProtKB-UniRule"/>
</dbReference>
<dbReference type="GO" id="GO:0006325">
    <property type="term" value="P:chromatin organization"/>
    <property type="evidence" value="ECO:0000250"/>
    <property type="project" value="UniProtKB"/>
</dbReference>
<dbReference type="GO" id="GO:0006406">
    <property type="term" value="P:mRNA export from nucleus"/>
    <property type="evidence" value="ECO:0007669"/>
    <property type="project" value="UniProtKB-UniRule"/>
</dbReference>
<dbReference type="GO" id="GO:0045893">
    <property type="term" value="P:positive regulation of DNA-templated transcription"/>
    <property type="evidence" value="ECO:0000250"/>
    <property type="project" value="UniProtKB"/>
</dbReference>
<dbReference type="GO" id="GO:0015031">
    <property type="term" value="P:protein transport"/>
    <property type="evidence" value="ECO:0007669"/>
    <property type="project" value="UniProtKB-KW"/>
</dbReference>
<dbReference type="GO" id="GO:0006357">
    <property type="term" value="P:regulation of transcription by RNA polymerase II"/>
    <property type="evidence" value="ECO:0007669"/>
    <property type="project" value="TreeGrafter"/>
</dbReference>
<dbReference type="FunFam" id="3.30.160.60:FF:000118">
    <property type="entry name" value="Ataxin-7-like protein 3"/>
    <property type="match status" value="1"/>
</dbReference>
<dbReference type="Gene3D" id="3.30.160.60">
    <property type="entry name" value="Classic Zinc Finger"/>
    <property type="match status" value="1"/>
</dbReference>
<dbReference type="HAMAP" id="MF_03047">
    <property type="entry name" value="Sgf11"/>
    <property type="match status" value="1"/>
</dbReference>
<dbReference type="InterPro" id="IPR013246">
    <property type="entry name" value="SAGA_su_Sgf11"/>
</dbReference>
<dbReference type="InterPro" id="IPR051078">
    <property type="entry name" value="SGF11"/>
</dbReference>
<dbReference type="PANTHER" id="PTHR46367">
    <property type="entry name" value="ATAXIN-7-LIKE PROTEIN 3"/>
    <property type="match status" value="1"/>
</dbReference>
<dbReference type="PANTHER" id="PTHR46367:SF1">
    <property type="entry name" value="ATAXIN-7-LIKE PROTEIN 3"/>
    <property type="match status" value="1"/>
</dbReference>
<dbReference type="Pfam" id="PF08209">
    <property type="entry name" value="Sgf11"/>
    <property type="match status" value="1"/>
</dbReference>
<evidence type="ECO:0000250" key="1"/>
<evidence type="ECO:0000255" key="2">
    <source>
        <dbReference type="HAMAP-Rule" id="MF_03047"/>
    </source>
</evidence>
<evidence type="ECO:0000256" key="3">
    <source>
        <dbReference type="SAM" id="MobiDB-lite"/>
    </source>
</evidence>
<feature type="chain" id="PRO_0000367523" description="SAGA-associated factor 11 homolog 1">
    <location>
        <begin position="1"/>
        <end position="211"/>
    </location>
</feature>
<feature type="zinc finger region" description="SGF11-type" evidence="2">
    <location>
        <begin position="115"/>
        <end position="136"/>
    </location>
</feature>
<feature type="region of interest" description="Disordered" evidence="3">
    <location>
        <begin position="149"/>
        <end position="211"/>
    </location>
</feature>
<feature type="compositionally biased region" description="Low complexity" evidence="3">
    <location>
        <begin position="157"/>
        <end position="166"/>
    </location>
</feature>
<feature type="compositionally biased region" description="Low complexity" evidence="3">
    <location>
        <begin position="197"/>
        <end position="211"/>
    </location>
</feature>
<feature type="modified residue" description="Phosphoserine" evidence="1">
    <location>
        <position position="187"/>
    </location>
</feature>